<proteinExistence type="evidence at transcript level"/>
<evidence type="ECO:0000250" key="1"/>
<evidence type="ECO:0000250" key="2">
    <source>
        <dbReference type="UniProtKB" id="Q06587"/>
    </source>
</evidence>
<evidence type="ECO:0000255" key="3">
    <source>
        <dbReference type="PROSITE-ProRule" id="PRU00175"/>
    </source>
</evidence>
<evidence type="ECO:0000256" key="4">
    <source>
        <dbReference type="SAM" id="MobiDB-lite"/>
    </source>
</evidence>
<evidence type="ECO:0000305" key="5"/>
<evidence type="ECO:0000312" key="6">
    <source>
        <dbReference type="RGD" id="3576"/>
    </source>
</evidence>
<gene>
    <name evidence="6" type="primary">Ring1</name>
    <name type="synonym">Rnf1</name>
</gene>
<feature type="chain" id="PRO_0000056387" description="E3 ubiquitin-protein ligase RING1">
    <location>
        <begin position="1"/>
        <end position="406"/>
    </location>
</feature>
<feature type="zinc finger region" description="RING-type" evidence="3">
    <location>
        <begin position="48"/>
        <end position="88"/>
    </location>
</feature>
<feature type="region of interest" description="Necessary for transcriptional repression" evidence="1">
    <location>
        <begin position="30"/>
        <end position="234"/>
    </location>
</feature>
<feature type="region of interest" description="Disordered" evidence="4">
    <location>
        <begin position="151"/>
        <end position="263"/>
    </location>
</feature>
<feature type="region of interest" description="Necessary for interaction with CBX2" evidence="1">
    <location>
        <begin position="230"/>
        <end position="406"/>
    </location>
</feature>
<feature type="region of interest" description="Disordered" evidence="4">
    <location>
        <begin position="309"/>
        <end position="354"/>
    </location>
</feature>
<feature type="short sequence motif" description="Nuclear localization signal" evidence="1">
    <location>
        <begin position="201"/>
        <end position="204"/>
    </location>
</feature>
<feature type="compositionally biased region" description="Acidic residues" evidence="4">
    <location>
        <begin position="175"/>
        <end position="187"/>
    </location>
</feature>
<feature type="compositionally biased region" description="Gly residues" evidence="4">
    <location>
        <begin position="205"/>
        <end position="228"/>
    </location>
</feature>
<feature type="compositionally biased region" description="Gly residues" evidence="4">
    <location>
        <begin position="235"/>
        <end position="244"/>
    </location>
</feature>
<feature type="compositionally biased region" description="Pro residues" evidence="4">
    <location>
        <begin position="246"/>
        <end position="258"/>
    </location>
</feature>
<feature type="compositionally biased region" description="Gly residues" evidence="4">
    <location>
        <begin position="317"/>
        <end position="343"/>
    </location>
</feature>
<feature type="modified residue" description="Phosphothreonine" evidence="2">
    <location>
        <position position="24"/>
    </location>
</feature>
<feature type="modified residue" description="Phosphoserine" evidence="2">
    <location>
        <position position="38"/>
    </location>
</feature>
<feature type="modified residue" description="Phosphoserine" evidence="2">
    <location>
        <position position="140"/>
    </location>
</feature>
<feature type="modified residue" description="Phosphoserine" evidence="2">
    <location>
        <position position="187"/>
    </location>
</feature>
<feature type="modified residue" description="Phosphoserine" evidence="2">
    <location>
        <position position="190"/>
    </location>
</feature>
<feature type="modified residue" description="Phosphothreonine" evidence="2">
    <location>
        <position position="215"/>
    </location>
</feature>
<feature type="modified residue" description="Phosphoserine" evidence="2">
    <location>
        <position position="229"/>
    </location>
</feature>
<feature type="modified residue" description="Phosphoserine" evidence="2">
    <location>
        <position position="232"/>
    </location>
</feature>
<feature type="modified residue" description="Phosphoserine" evidence="2">
    <location>
        <position position="248"/>
    </location>
</feature>
<feature type="modified residue" description="Phosphoserine" evidence="2">
    <location>
        <position position="254"/>
    </location>
</feature>
<feature type="splice variant" id="VSP_017698" description="In isoform 2." evidence="5">
    <location>
        <begin position="1"/>
        <end position="29"/>
    </location>
</feature>
<feature type="sequence conflict" description="In Ref. 3; CAA64746." evidence="5" ref="3">
    <original>L</original>
    <variation>C</variation>
    <location>
        <position position="65"/>
    </location>
</feature>
<sequence>MTTPANAQNASKTWELSLYELHRTPQEAIMDGTEIAVSPRSLHSELMCPICLDMLKNTMTTKECLHRFCSDCIVTALRSGNKECPTCRKKLVSKRSLRPDPNFDALISKIYPSREEYEAHQDRVLIRLSRLHNQQALSSSIEEGLRMQAMHRAQRVRRPMPGSDQTTTMSGGEGEPGEGEGDGEDISSDSAPDSAPGPAPKRPRGGGAGGSSVGTGGGAAGGACGGAGSEDSGDRGGTLGGGTLGPPSPPGAPSPPEPGGEIELVFRPHPLLVEKGEYCQTRYVKTTGNATVDHLSKYLALRIALERRQQQETVEPGGPGGGASDTGGPDGGGGERGVSGGGEGPEEPALPSLEGVSEKQYTIYIAPGGGAFTTLNGSLTLELVNEKFWKVSRPLELCYAPTKDPK</sequence>
<dbReference type="EC" id="2.3.2.27"/>
<dbReference type="EMBL" id="BX883042">
    <property type="protein sequence ID" value="CAE83930.1"/>
    <property type="molecule type" value="Genomic_DNA"/>
</dbReference>
<dbReference type="EMBL" id="BC098635">
    <property type="protein sequence ID" value="AAH98635.2"/>
    <property type="status" value="ALT_INIT"/>
    <property type="molecule type" value="mRNA"/>
</dbReference>
<dbReference type="EMBL" id="X95474">
    <property type="protein sequence ID" value="CAA64746.1"/>
    <property type="molecule type" value="Genomic_DNA"/>
</dbReference>
<dbReference type="RefSeq" id="NP_997714.2">
    <molecule id="Q6MGB6-1"/>
    <property type="nucleotide sequence ID" value="NM_212549.2"/>
</dbReference>
<dbReference type="SMR" id="Q6MGB6"/>
<dbReference type="FunCoup" id="Q6MGB6">
    <property type="interactions" value="2642"/>
</dbReference>
<dbReference type="STRING" id="10116.ENSRNOP00000000543"/>
<dbReference type="iPTMnet" id="Q6MGB6"/>
<dbReference type="PhosphoSitePlus" id="Q6MGB6"/>
<dbReference type="jPOST" id="Q6MGB6"/>
<dbReference type="PaxDb" id="10116-ENSRNOP00000000543"/>
<dbReference type="GeneID" id="309626"/>
<dbReference type="KEGG" id="rno:309626"/>
<dbReference type="UCSC" id="RGD:3576">
    <molecule id="Q6MGB6-1"/>
    <property type="organism name" value="rat"/>
</dbReference>
<dbReference type="AGR" id="RGD:3576"/>
<dbReference type="CTD" id="6015"/>
<dbReference type="RGD" id="3576">
    <property type="gene designation" value="Ring1"/>
</dbReference>
<dbReference type="VEuPathDB" id="HostDB:ENSRNOG00000000467"/>
<dbReference type="eggNOG" id="KOG0311">
    <property type="taxonomic scope" value="Eukaryota"/>
</dbReference>
<dbReference type="HOGENOM" id="CLU_056557_1_0_1"/>
<dbReference type="InParanoid" id="Q6MGB6"/>
<dbReference type="OrthoDB" id="86238at9989"/>
<dbReference type="PhylomeDB" id="Q6MGB6"/>
<dbReference type="TreeFam" id="TF105501"/>
<dbReference type="Reactome" id="R-RNO-2559580">
    <property type="pathway name" value="Oxidative Stress Induced Senescence"/>
</dbReference>
<dbReference type="Reactome" id="R-RNO-3108214">
    <property type="pathway name" value="SUMOylation of DNA damage response and repair proteins"/>
</dbReference>
<dbReference type="Reactome" id="R-RNO-3899300">
    <property type="pathway name" value="SUMOylation of transcription cofactors"/>
</dbReference>
<dbReference type="Reactome" id="R-RNO-4551638">
    <property type="pathway name" value="SUMOylation of chromatin organization proteins"/>
</dbReference>
<dbReference type="Reactome" id="R-RNO-4570464">
    <property type="pathway name" value="SUMOylation of RNA binding proteins"/>
</dbReference>
<dbReference type="Reactome" id="R-RNO-8939243">
    <property type="pathway name" value="RUNX1 interacts with co-factors whose precise effect on RUNX1 targets is not known"/>
</dbReference>
<dbReference type="Reactome" id="R-RNO-8953750">
    <property type="pathway name" value="Transcriptional Regulation by E2F6"/>
</dbReference>
<dbReference type="UniPathway" id="UPA00143"/>
<dbReference type="PRO" id="PR:Q6MGB6"/>
<dbReference type="Proteomes" id="UP000002494">
    <property type="component" value="Chromosome 20"/>
</dbReference>
<dbReference type="Bgee" id="ENSRNOG00000000467">
    <property type="expression patterns" value="Expressed in pancreas and 20 other cell types or tissues"/>
</dbReference>
<dbReference type="ExpressionAtlas" id="Q6MGB6">
    <property type="expression patterns" value="baseline and differential"/>
</dbReference>
<dbReference type="GO" id="GO:0016604">
    <property type="term" value="C:nuclear body"/>
    <property type="evidence" value="ECO:0000266"/>
    <property type="project" value="RGD"/>
</dbReference>
<dbReference type="GO" id="GO:0016607">
    <property type="term" value="C:nuclear speck"/>
    <property type="evidence" value="ECO:0007669"/>
    <property type="project" value="UniProtKB-SubCell"/>
</dbReference>
<dbReference type="GO" id="GO:0005634">
    <property type="term" value="C:nucleus"/>
    <property type="evidence" value="ECO:0000266"/>
    <property type="project" value="RGD"/>
</dbReference>
<dbReference type="GO" id="GO:0031519">
    <property type="term" value="C:PcG protein complex"/>
    <property type="evidence" value="ECO:0000250"/>
    <property type="project" value="UniProtKB"/>
</dbReference>
<dbReference type="GO" id="GO:0035102">
    <property type="term" value="C:PRC1 complex"/>
    <property type="evidence" value="ECO:0000250"/>
    <property type="project" value="UniProtKB"/>
</dbReference>
<dbReference type="GO" id="GO:0001739">
    <property type="term" value="C:sex chromatin"/>
    <property type="evidence" value="ECO:0000266"/>
    <property type="project" value="RGD"/>
</dbReference>
<dbReference type="GO" id="GO:0000151">
    <property type="term" value="C:ubiquitin ligase complex"/>
    <property type="evidence" value="ECO:0000318"/>
    <property type="project" value="GO_Central"/>
</dbReference>
<dbReference type="GO" id="GO:0003682">
    <property type="term" value="F:chromatin binding"/>
    <property type="evidence" value="ECO:0000266"/>
    <property type="project" value="RGD"/>
</dbReference>
<dbReference type="GO" id="GO:0061630">
    <property type="term" value="F:ubiquitin protein ligase activity"/>
    <property type="evidence" value="ECO:0000318"/>
    <property type="project" value="GO_Central"/>
</dbReference>
<dbReference type="GO" id="GO:0097027">
    <property type="term" value="F:ubiquitin-protein transferase activator activity"/>
    <property type="evidence" value="ECO:0000266"/>
    <property type="project" value="RGD"/>
</dbReference>
<dbReference type="GO" id="GO:0008270">
    <property type="term" value="F:zinc ion binding"/>
    <property type="evidence" value="ECO:0007669"/>
    <property type="project" value="UniProtKB-KW"/>
</dbReference>
<dbReference type="GO" id="GO:0009952">
    <property type="term" value="P:anterior/posterior pattern specification"/>
    <property type="evidence" value="ECO:0000266"/>
    <property type="project" value="RGD"/>
</dbReference>
<dbReference type="GO" id="GO:0048593">
    <property type="term" value="P:camera-type eye morphogenesis"/>
    <property type="evidence" value="ECO:0000266"/>
    <property type="project" value="RGD"/>
</dbReference>
<dbReference type="GO" id="GO:0006325">
    <property type="term" value="P:chromatin organization"/>
    <property type="evidence" value="ECO:0000266"/>
    <property type="project" value="RGD"/>
</dbReference>
<dbReference type="GO" id="GO:0006338">
    <property type="term" value="P:chromatin remodeling"/>
    <property type="evidence" value="ECO:0000266"/>
    <property type="project" value="RGD"/>
</dbReference>
<dbReference type="GO" id="GO:0045892">
    <property type="term" value="P:negative regulation of DNA-templated transcription"/>
    <property type="evidence" value="ECO:0000266"/>
    <property type="project" value="RGD"/>
</dbReference>
<dbReference type="GO" id="GO:0016567">
    <property type="term" value="P:protein ubiquitination"/>
    <property type="evidence" value="ECO:0007669"/>
    <property type="project" value="UniProtKB-UniPathway"/>
</dbReference>
<dbReference type="CDD" id="cd17166">
    <property type="entry name" value="RAWUL_RING1"/>
    <property type="match status" value="1"/>
</dbReference>
<dbReference type="CDD" id="cd16739">
    <property type="entry name" value="RING-HC_RING1"/>
    <property type="match status" value="1"/>
</dbReference>
<dbReference type="FunFam" id="3.30.40.10:FF:000265">
    <property type="entry name" value="E3 ubiquitin-protein ligase RING1"/>
    <property type="match status" value="1"/>
</dbReference>
<dbReference type="Gene3D" id="3.10.20.90">
    <property type="entry name" value="Phosphatidylinositol 3-kinase Catalytic Subunit, Chain A, domain 1"/>
    <property type="match status" value="1"/>
</dbReference>
<dbReference type="Gene3D" id="3.30.40.10">
    <property type="entry name" value="Zinc/RING finger domain, C3HC4 (zinc finger)"/>
    <property type="match status" value="1"/>
</dbReference>
<dbReference type="InterPro" id="IPR032443">
    <property type="entry name" value="RAWUL"/>
</dbReference>
<dbReference type="InterPro" id="IPR043540">
    <property type="entry name" value="RING1/RING2"/>
</dbReference>
<dbReference type="InterPro" id="IPR042741">
    <property type="entry name" value="RING1_RING-HC"/>
</dbReference>
<dbReference type="InterPro" id="IPR001841">
    <property type="entry name" value="Znf_RING"/>
</dbReference>
<dbReference type="InterPro" id="IPR013083">
    <property type="entry name" value="Znf_RING/FYVE/PHD"/>
</dbReference>
<dbReference type="InterPro" id="IPR017907">
    <property type="entry name" value="Znf_RING_CS"/>
</dbReference>
<dbReference type="PANTHER" id="PTHR46076:SF2">
    <property type="entry name" value="E3 UBIQUITIN-PROTEIN LIGASE RING1"/>
    <property type="match status" value="1"/>
</dbReference>
<dbReference type="PANTHER" id="PTHR46076">
    <property type="entry name" value="E3 UBIQUITIN-PROTEIN LIGASE RING1 / RING 2 FAMILY MEMBER"/>
    <property type="match status" value="1"/>
</dbReference>
<dbReference type="Pfam" id="PF16207">
    <property type="entry name" value="RAWUL"/>
    <property type="match status" value="1"/>
</dbReference>
<dbReference type="Pfam" id="PF13923">
    <property type="entry name" value="zf-C3HC4_2"/>
    <property type="match status" value="1"/>
</dbReference>
<dbReference type="SMART" id="SM00184">
    <property type="entry name" value="RING"/>
    <property type="match status" value="1"/>
</dbReference>
<dbReference type="SUPFAM" id="SSF57850">
    <property type="entry name" value="RING/U-box"/>
    <property type="match status" value="1"/>
</dbReference>
<dbReference type="PROSITE" id="PS00518">
    <property type="entry name" value="ZF_RING_1"/>
    <property type="match status" value="1"/>
</dbReference>
<dbReference type="PROSITE" id="PS50089">
    <property type="entry name" value="ZF_RING_2"/>
    <property type="match status" value="1"/>
</dbReference>
<keyword id="KW-0025">Alternative splicing</keyword>
<keyword id="KW-0156">Chromatin regulator</keyword>
<keyword id="KW-0479">Metal-binding</keyword>
<keyword id="KW-0539">Nucleus</keyword>
<keyword id="KW-0597">Phosphoprotein</keyword>
<keyword id="KW-1185">Reference proteome</keyword>
<keyword id="KW-0678">Repressor</keyword>
<keyword id="KW-0804">Transcription</keyword>
<keyword id="KW-0805">Transcription regulation</keyword>
<keyword id="KW-0808">Transferase</keyword>
<keyword id="KW-0833">Ubl conjugation pathway</keyword>
<keyword id="KW-0862">Zinc</keyword>
<keyword id="KW-0863">Zinc-finger</keyword>
<name>RING1_RAT</name>
<accession>Q6MGB6</accession>
<accession>Q4KMC1</accession>
<accession>Q63510</accession>
<protein>
    <recommendedName>
        <fullName>E3 ubiquitin-protein ligase RING1</fullName>
        <ecNumber>2.3.2.27</ecNumber>
    </recommendedName>
    <alternativeName>
        <fullName>Polycomb complex protein RING1</fullName>
    </alternativeName>
    <alternativeName>
        <fullName>RING finger protein 1</fullName>
    </alternativeName>
    <alternativeName>
        <fullName evidence="5">RING-type E3 ubiquitin transferase RING1</fullName>
    </alternativeName>
</protein>
<comment type="function">
    <text evidence="1">Constitutes one of the E3 ubiquitin-protein ligases that mediate monoubiquitination of 'Lys-119' of histone H2A, thereby playing a central role in histone code and gene regulation. H2A 'Lys-119' ubiquitination gives a specific tag for epigenetic transcriptional repression and participates in X chromosome inactivation of female mammals. Essential component of a Polycomb group (PcG) multiprotein PRC1-like complex, a complex class required to maintain the transcriptionally repressive state of many genes, including Hox genes, throughout development. PcG PRC1 complex acts via chromatin remodeling and modification of histones, rendering chromatin heritably changed in its expressibility. Compared to RNF2/RING2, it does not have the main E3 ubiquitin ligase activity on histone H2A, and it may rather act as a modulator of RNF2/RING2 activity (By similarity).</text>
</comment>
<comment type="catalytic activity">
    <reaction>
        <text>S-ubiquitinyl-[E2 ubiquitin-conjugating enzyme]-L-cysteine + [acceptor protein]-L-lysine = [E2 ubiquitin-conjugating enzyme]-L-cysteine + N(6)-ubiquitinyl-[acceptor protein]-L-lysine.</text>
        <dbReference type="EC" id="2.3.2.27"/>
    </reaction>
</comment>
<comment type="pathway">
    <text>Protein modification; protein ubiquitination.</text>
</comment>
<comment type="subunit">
    <text evidence="1 2">Component of chromatin-associated Polycomb (PcG) complexes. Part of the E2F6.com-1 complex in G0 phase composed of E2F6, MGA, MAX, TFDP1, CBX3, BAT8, EUHMTASE1, RING1, RNF2/RING2 MBLR, L3MBTL2 and YAF2. Interacts with CBX2 and PCGF6. Component of a PRC1-like complex. Component of repressive BCOR complex containing Polycomb group subcomplex at least composed of RYBP, PCGF1, BCOR and RNF2/RING2. Interacts with BMI1, PHC2, PCGF2, RNF2; CBX6, CBX7 and CBX8 (By similarity). Interacts with MN1 (By similarity). Interacts with USP26.</text>
</comment>
<comment type="subcellular location">
    <subcellularLocation>
        <location evidence="1">Nucleus speckle</location>
    </subcellularLocation>
</comment>
<comment type="alternative products">
    <event type="alternative splicing"/>
    <isoform>
        <id>Q6MGB6-1</id>
        <name>1</name>
        <sequence type="displayed"/>
    </isoform>
    <isoform>
        <id>Q6MGB6-2</id>
        <name>2</name>
        <sequence type="described" ref="VSP_017698"/>
    </isoform>
</comment>
<comment type="sequence caution" evidence="5">
    <conflict type="erroneous initiation">
        <sequence resource="EMBL-CDS" id="AAH98635"/>
    </conflict>
</comment>
<organism>
    <name type="scientific">Rattus norvegicus</name>
    <name type="common">Rat</name>
    <dbReference type="NCBI Taxonomy" id="10116"/>
    <lineage>
        <taxon>Eukaryota</taxon>
        <taxon>Metazoa</taxon>
        <taxon>Chordata</taxon>
        <taxon>Craniata</taxon>
        <taxon>Vertebrata</taxon>
        <taxon>Euteleostomi</taxon>
        <taxon>Mammalia</taxon>
        <taxon>Eutheria</taxon>
        <taxon>Euarchontoglires</taxon>
        <taxon>Glires</taxon>
        <taxon>Rodentia</taxon>
        <taxon>Myomorpha</taxon>
        <taxon>Muroidea</taxon>
        <taxon>Muridae</taxon>
        <taxon>Murinae</taxon>
        <taxon>Rattus</taxon>
    </lineage>
</organism>
<reference key="1">
    <citation type="journal article" date="2004" name="Genome Res.">
        <title>The genomic sequence and comparative analysis of the rat major histocompatibility complex.</title>
        <authorList>
            <person name="Hurt P."/>
            <person name="Walter L."/>
            <person name="Sudbrak R."/>
            <person name="Klages S."/>
            <person name="Mueller I."/>
            <person name="Shiina T."/>
            <person name="Inoko H."/>
            <person name="Lehrach H."/>
            <person name="Guenther E."/>
            <person name="Reinhardt R."/>
            <person name="Himmelbauer H."/>
        </authorList>
    </citation>
    <scope>NUCLEOTIDE SEQUENCE [LARGE SCALE GENOMIC DNA]</scope>
    <scope>ALTERNATIVE SPLICING (ISOFORM 2)</scope>
    <source>
        <strain>Brown Norway</strain>
    </source>
</reference>
<reference key="2">
    <citation type="journal article" date="2004" name="Genome Res.">
        <title>The status, quality, and expansion of the NIH full-length cDNA project: the Mammalian Gene Collection (MGC).</title>
        <authorList>
            <consortium name="The MGC Project Team"/>
        </authorList>
    </citation>
    <scope>NUCLEOTIDE SEQUENCE [LARGE SCALE MRNA] (ISOFORM 1)</scope>
    <source>
        <strain>Brown Norway</strain>
        <tissue>Lung</tissue>
    </source>
</reference>
<reference key="3">
    <citation type="journal article" date="1996" name="Immunogenetics">
        <title>Physical mapping of the Ring1, Ring2, Ke6, Ke4, Rxrb, Col11a2 and RT1.Hb genes of the rat major histocompatibility complex.</title>
        <authorList>
            <person name="Walter L."/>
            <person name="Fischer K."/>
            <person name="Guenther E."/>
        </authorList>
    </citation>
    <scope>NUCLEOTIDE SEQUENCE [GENOMIC DNA] OF 30-78</scope>
    <source>
        <strain>Lewis</strain>
    </source>
</reference>